<keyword id="KW-0028">Amino-acid biosynthesis</keyword>
<keyword id="KW-0057">Aromatic amino acid biosynthesis</keyword>
<keyword id="KW-0456">Lyase</keyword>
<keyword id="KW-0822">Tryptophan biosynthesis</keyword>
<proteinExistence type="inferred from homology"/>
<name>TRPA_COXBR</name>
<sequence>MNRIEQQFKKSPAYVAYLTAGDGGLERSLESLLALAKGGVNILEVGVPFSDPVADGPVIQEASIRALAQGTTLHDVLTLITSFRQHSEIPIILFTYFNPLLAAGDKIYQQMKSAGVDGCLVVDLPVEEAAPHLTACKTAKIAPILLISPSTTQERLKKINEHGEGMLYYVCRPGTTGVRATLPENFPAKMNQIKSMTSLPIVTGFGIANRKMAAQALQYADGFVIGSLFVKAIAEGISKNALTRLAQSLNPHYPNLRLITPFRKKTF</sequence>
<evidence type="ECO:0000255" key="1">
    <source>
        <dbReference type="HAMAP-Rule" id="MF_00131"/>
    </source>
</evidence>
<dbReference type="EC" id="4.2.1.20" evidence="1"/>
<dbReference type="EMBL" id="CP000890">
    <property type="protein sequence ID" value="ABX78292.1"/>
    <property type="molecule type" value="Genomic_DNA"/>
</dbReference>
<dbReference type="RefSeq" id="WP_010958043.1">
    <property type="nucleotide sequence ID" value="NC_010117.1"/>
</dbReference>
<dbReference type="SMR" id="A9NDN6"/>
<dbReference type="KEGG" id="cbs:COXBURSA331_A1308"/>
<dbReference type="HOGENOM" id="CLU_016734_0_0_6"/>
<dbReference type="UniPathway" id="UPA00035">
    <property type="reaction ID" value="UER00044"/>
</dbReference>
<dbReference type="GO" id="GO:0005829">
    <property type="term" value="C:cytosol"/>
    <property type="evidence" value="ECO:0007669"/>
    <property type="project" value="TreeGrafter"/>
</dbReference>
<dbReference type="GO" id="GO:0004834">
    <property type="term" value="F:tryptophan synthase activity"/>
    <property type="evidence" value="ECO:0007669"/>
    <property type="project" value="UniProtKB-UniRule"/>
</dbReference>
<dbReference type="CDD" id="cd04724">
    <property type="entry name" value="Tryptophan_synthase_alpha"/>
    <property type="match status" value="1"/>
</dbReference>
<dbReference type="FunFam" id="3.20.20.70:FF:000037">
    <property type="entry name" value="Tryptophan synthase alpha chain"/>
    <property type="match status" value="1"/>
</dbReference>
<dbReference type="Gene3D" id="3.20.20.70">
    <property type="entry name" value="Aldolase class I"/>
    <property type="match status" value="1"/>
</dbReference>
<dbReference type="HAMAP" id="MF_00131">
    <property type="entry name" value="Trp_synth_alpha"/>
    <property type="match status" value="1"/>
</dbReference>
<dbReference type="InterPro" id="IPR013785">
    <property type="entry name" value="Aldolase_TIM"/>
</dbReference>
<dbReference type="InterPro" id="IPR011060">
    <property type="entry name" value="RibuloseP-bd_barrel"/>
</dbReference>
<dbReference type="InterPro" id="IPR018204">
    <property type="entry name" value="Trp_synthase_alpha_AS"/>
</dbReference>
<dbReference type="InterPro" id="IPR002028">
    <property type="entry name" value="Trp_synthase_suA"/>
</dbReference>
<dbReference type="NCBIfam" id="TIGR00262">
    <property type="entry name" value="trpA"/>
    <property type="match status" value="1"/>
</dbReference>
<dbReference type="PANTHER" id="PTHR43406:SF1">
    <property type="entry name" value="TRYPTOPHAN SYNTHASE ALPHA CHAIN, CHLOROPLASTIC"/>
    <property type="match status" value="1"/>
</dbReference>
<dbReference type="PANTHER" id="PTHR43406">
    <property type="entry name" value="TRYPTOPHAN SYNTHASE, ALPHA CHAIN"/>
    <property type="match status" value="1"/>
</dbReference>
<dbReference type="Pfam" id="PF00290">
    <property type="entry name" value="Trp_syntA"/>
    <property type="match status" value="1"/>
</dbReference>
<dbReference type="SUPFAM" id="SSF51366">
    <property type="entry name" value="Ribulose-phoshate binding barrel"/>
    <property type="match status" value="1"/>
</dbReference>
<dbReference type="PROSITE" id="PS00167">
    <property type="entry name" value="TRP_SYNTHASE_ALPHA"/>
    <property type="match status" value="1"/>
</dbReference>
<gene>
    <name evidence="1" type="primary">trpA</name>
    <name type="ordered locus">COXBURSA331_A1308</name>
</gene>
<accession>A9NDN6</accession>
<feature type="chain" id="PRO_1000076352" description="Tryptophan synthase alpha chain">
    <location>
        <begin position="1"/>
        <end position="267"/>
    </location>
</feature>
<feature type="active site" description="Proton acceptor" evidence="1">
    <location>
        <position position="44"/>
    </location>
</feature>
<feature type="active site" description="Proton acceptor" evidence="1">
    <location>
        <position position="55"/>
    </location>
</feature>
<reference key="1">
    <citation type="submission" date="2007-11" db="EMBL/GenBank/DDBJ databases">
        <title>Genome sequencing of phylogenetically and phenotypically diverse Coxiella burnetii isolates.</title>
        <authorList>
            <person name="Seshadri R."/>
            <person name="Samuel J.E."/>
        </authorList>
    </citation>
    <scope>NUCLEOTIDE SEQUENCE [LARGE SCALE GENOMIC DNA]</scope>
    <source>
        <strain>RSA 331 / Henzerling II</strain>
    </source>
</reference>
<protein>
    <recommendedName>
        <fullName evidence="1">Tryptophan synthase alpha chain</fullName>
        <ecNumber evidence="1">4.2.1.20</ecNumber>
    </recommendedName>
</protein>
<organism>
    <name type="scientific">Coxiella burnetii (strain RSA 331 / Henzerling II)</name>
    <dbReference type="NCBI Taxonomy" id="360115"/>
    <lineage>
        <taxon>Bacteria</taxon>
        <taxon>Pseudomonadati</taxon>
        <taxon>Pseudomonadota</taxon>
        <taxon>Gammaproteobacteria</taxon>
        <taxon>Legionellales</taxon>
        <taxon>Coxiellaceae</taxon>
        <taxon>Coxiella</taxon>
    </lineage>
</organism>
<comment type="function">
    <text evidence="1">The alpha subunit is responsible for the aldol cleavage of indoleglycerol phosphate to indole and glyceraldehyde 3-phosphate.</text>
</comment>
<comment type="catalytic activity">
    <reaction evidence="1">
        <text>(1S,2R)-1-C-(indol-3-yl)glycerol 3-phosphate + L-serine = D-glyceraldehyde 3-phosphate + L-tryptophan + H2O</text>
        <dbReference type="Rhea" id="RHEA:10532"/>
        <dbReference type="ChEBI" id="CHEBI:15377"/>
        <dbReference type="ChEBI" id="CHEBI:33384"/>
        <dbReference type="ChEBI" id="CHEBI:57912"/>
        <dbReference type="ChEBI" id="CHEBI:58866"/>
        <dbReference type="ChEBI" id="CHEBI:59776"/>
        <dbReference type="EC" id="4.2.1.20"/>
    </reaction>
</comment>
<comment type="pathway">
    <text evidence="1">Amino-acid biosynthesis; L-tryptophan biosynthesis; L-tryptophan from chorismate: step 5/5.</text>
</comment>
<comment type="subunit">
    <text evidence="1">Tetramer of two alpha and two beta chains.</text>
</comment>
<comment type="similarity">
    <text evidence="1">Belongs to the TrpA family.</text>
</comment>